<proteinExistence type="inferred from homology"/>
<keyword id="KW-0963">Cytoplasm</keyword>
<keyword id="KW-0378">Hydrolase</keyword>
<keyword id="KW-0540">Nuclease</keyword>
<keyword id="KW-0690">Ribosome biogenesis</keyword>
<accession>B3EPT4</accession>
<reference key="1">
    <citation type="submission" date="2008-06" db="EMBL/GenBank/DDBJ databases">
        <title>Complete sequence of Chlorobium phaeobacteroides BS1.</title>
        <authorList>
            <consortium name="US DOE Joint Genome Institute"/>
            <person name="Lucas S."/>
            <person name="Copeland A."/>
            <person name="Lapidus A."/>
            <person name="Glavina del Rio T."/>
            <person name="Dalin E."/>
            <person name="Tice H."/>
            <person name="Bruce D."/>
            <person name="Goodwin L."/>
            <person name="Pitluck S."/>
            <person name="Schmutz J."/>
            <person name="Larimer F."/>
            <person name="Land M."/>
            <person name="Hauser L."/>
            <person name="Kyrpides N."/>
            <person name="Ovchinnikova G."/>
            <person name="Li T."/>
            <person name="Liu Z."/>
            <person name="Zhao F."/>
            <person name="Overmann J."/>
            <person name="Bryant D.A."/>
            <person name="Richardson P."/>
        </authorList>
    </citation>
    <scope>NUCLEOTIDE SEQUENCE [LARGE SCALE GENOMIC DNA]</scope>
    <source>
        <strain>BS1</strain>
    </source>
</reference>
<evidence type="ECO:0000255" key="1">
    <source>
        <dbReference type="HAMAP-Rule" id="MF_00651"/>
    </source>
</evidence>
<sequence>MGKIPIKRILAIDYGKKRTGLAKTDPFCSFAQPVGTFPPEKIITIIKSFLQENSVEKIIVGYPLNSDGTKNPMTGIIDGFIEELSAAFPDIPVEPIDEHGSSKQAGKVLIESGLSRKKRQRKGRLDSAAACLLLQHYLENTGNA</sequence>
<protein>
    <recommendedName>
        <fullName evidence="1">Putative pre-16S rRNA nuclease</fullName>
        <ecNumber evidence="1">3.1.-.-</ecNumber>
    </recommendedName>
</protein>
<name>YQGF_CHLPB</name>
<dbReference type="EC" id="3.1.-.-" evidence="1"/>
<dbReference type="EMBL" id="CP001101">
    <property type="protein sequence ID" value="ACE05324.1"/>
    <property type="molecule type" value="Genomic_DNA"/>
</dbReference>
<dbReference type="SMR" id="B3EPT4"/>
<dbReference type="STRING" id="331678.Cphamn1_2429"/>
<dbReference type="KEGG" id="cpb:Cphamn1_2429"/>
<dbReference type="eggNOG" id="COG0816">
    <property type="taxonomic scope" value="Bacteria"/>
</dbReference>
<dbReference type="HOGENOM" id="CLU_098240_2_1_10"/>
<dbReference type="OrthoDB" id="9796140at2"/>
<dbReference type="GO" id="GO:0005829">
    <property type="term" value="C:cytosol"/>
    <property type="evidence" value="ECO:0007669"/>
    <property type="project" value="TreeGrafter"/>
</dbReference>
<dbReference type="GO" id="GO:0004518">
    <property type="term" value="F:nuclease activity"/>
    <property type="evidence" value="ECO:0007669"/>
    <property type="project" value="UniProtKB-KW"/>
</dbReference>
<dbReference type="GO" id="GO:0000967">
    <property type="term" value="P:rRNA 5'-end processing"/>
    <property type="evidence" value="ECO:0007669"/>
    <property type="project" value="UniProtKB-UniRule"/>
</dbReference>
<dbReference type="CDD" id="cd16964">
    <property type="entry name" value="YqgF"/>
    <property type="match status" value="1"/>
</dbReference>
<dbReference type="Gene3D" id="3.30.420.140">
    <property type="entry name" value="YqgF/RNase H-like domain"/>
    <property type="match status" value="1"/>
</dbReference>
<dbReference type="HAMAP" id="MF_00651">
    <property type="entry name" value="Nuclease_YqgF"/>
    <property type="match status" value="1"/>
</dbReference>
<dbReference type="InterPro" id="IPR012337">
    <property type="entry name" value="RNaseH-like_sf"/>
</dbReference>
<dbReference type="InterPro" id="IPR005227">
    <property type="entry name" value="YqgF"/>
</dbReference>
<dbReference type="InterPro" id="IPR006641">
    <property type="entry name" value="YqgF/RNaseH-like_dom"/>
</dbReference>
<dbReference type="InterPro" id="IPR037027">
    <property type="entry name" value="YqgF/RNaseH-like_dom_sf"/>
</dbReference>
<dbReference type="NCBIfam" id="TIGR00250">
    <property type="entry name" value="RNAse_H_YqgF"/>
    <property type="match status" value="1"/>
</dbReference>
<dbReference type="PANTHER" id="PTHR33317">
    <property type="entry name" value="POLYNUCLEOTIDYL TRANSFERASE, RIBONUCLEASE H-LIKE SUPERFAMILY PROTEIN"/>
    <property type="match status" value="1"/>
</dbReference>
<dbReference type="PANTHER" id="PTHR33317:SF4">
    <property type="entry name" value="POLYNUCLEOTIDYL TRANSFERASE, RIBONUCLEASE H-LIKE SUPERFAMILY PROTEIN"/>
    <property type="match status" value="1"/>
</dbReference>
<dbReference type="Pfam" id="PF03652">
    <property type="entry name" value="RuvX"/>
    <property type="match status" value="1"/>
</dbReference>
<dbReference type="SMART" id="SM00732">
    <property type="entry name" value="YqgFc"/>
    <property type="match status" value="1"/>
</dbReference>
<dbReference type="SUPFAM" id="SSF53098">
    <property type="entry name" value="Ribonuclease H-like"/>
    <property type="match status" value="1"/>
</dbReference>
<feature type="chain" id="PRO_1000131010" description="Putative pre-16S rRNA nuclease">
    <location>
        <begin position="1"/>
        <end position="144"/>
    </location>
</feature>
<organism>
    <name type="scientific">Chlorobium phaeobacteroides (strain BS1)</name>
    <dbReference type="NCBI Taxonomy" id="331678"/>
    <lineage>
        <taxon>Bacteria</taxon>
        <taxon>Pseudomonadati</taxon>
        <taxon>Chlorobiota</taxon>
        <taxon>Chlorobiia</taxon>
        <taxon>Chlorobiales</taxon>
        <taxon>Chlorobiaceae</taxon>
        <taxon>Chlorobium/Pelodictyon group</taxon>
        <taxon>Chlorobium</taxon>
    </lineage>
</organism>
<gene>
    <name type="ordered locus">Cphamn1_2429</name>
</gene>
<comment type="function">
    <text evidence="1">Could be a nuclease involved in processing of the 5'-end of pre-16S rRNA.</text>
</comment>
<comment type="subcellular location">
    <subcellularLocation>
        <location evidence="1">Cytoplasm</location>
    </subcellularLocation>
</comment>
<comment type="similarity">
    <text evidence="1">Belongs to the YqgF nuclease family.</text>
</comment>